<name>RRP36_CANAW</name>
<protein>
    <recommendedName>
        <fullName>rRNA biogenesis protein RRP36</fullName>
    </recommendedName>
    <alternativeName>
        <fullName>Ribosomal RNA-processing protein 36</fullName>
    </alternativeName>
</protein>
<sequence>MSRGKTIRPSYYDEEESSQDELSHTLNKGRSNIGSQSDDEEMSKISFGALNRAQTKLNKHNQKHKTQEDNYKSSEEEFFDSGSDSDGLPEETSSKDTKKKKNKHAPSESSSKRPVSRIRDIPGLPSRKQQTLHTDIRFDAAYGKADLAKARKDYAFLDEYRKQEIANMESLLKDKKSKLNDDEREEIKLQLQSLKSRMDTLKNRDLENSILSNYKKQQMESFKEGKVNKPYFLKRSDKRKILQKAKFDSMKPKQREKAMERKRKKRLGKEFRQLEFKPTNR</sequence>
<feature type="chain" id="PRO_0000397622" description="rRNA biogenesis protein RRP36">
    <location>
        <begin position="1"/>
        <end position="281"/>
    </location>
</feature>
<feature type="region of interest" description="Disordered" evidence="3">
    <location>
        <begin position="1"/>
        <end position="135"/>
    </location>
</feature>
<feature type="region of interest" description="Disordered" evidence="3">
    <location>
        <begin position="243"/>
        <end position="281"/>
    </location>
</feature>
<feature type="coiled-coil region" evidence="2">
    <location>
        <begin position="48"/>
        <end position="78"/>
    </location>
</feature>
<feature type="coiled-coil region" evidence="2">
    <location>
        <begin position="161"/>
        <end position="205"/>
    </location>
</feature>
<feature type="compositionally biased region" description="Polar residues" evidence="3">
    <location>
        <begin position="24"/>
        <end position="36"/>
    </location>
</feature>
<feature type="compositionally biased region" description="Basic and acidic residues" evidence="3">
    <location>
        <begin position="65"/>
        <end position="75"/>
    </location>
</feature>
<feature type="compositionally biased region" description="Basic and acidic residues" evidence="3">
    <location>
        <begin position="245"/>
        <end position="259"/>
    </location>
</feature>
<comment type="function">
    <text evidence="1">Component of the 90S pre-ribosome involved in the maturation of rRNAs. Required for early cleavages of the pre-RNAs in the 40S ribosomal subunit maturation pathway (By similarity).</text>
</comment>
<comment type="subunit">
    <text evidence="1">Associates with 90S and pre-40S pre-ribosomal particles.</text>
</comment>
<comment type="subcellular location">
    <subcellularLocation>
        <location evidence="1">Nucleus</location>
        <location evidence="1">Nucleolus</location>
    </subcellularLocation>
</comment>
<comment type="similarity">
    <text evidence="4">Belongs to the RRP36 family.</text>
</comment>
<evidence type="ECO:0000250" key="1"/>
<evidence type="ECO:0000255" key="2"/>
<evidence type="ECO:0000256" key="3">
    <source>
        <dbReference type="SAM" id="MobiDB-lite"/>
    </source>
</evidence>
<evidence type="ECO:0000305" key="4"/>
<proteinExistence type="inferred from homology"/>
<reference key="1">
    <citation type="journal article" date="2009" name="Nature">
        <title>Evolution of pathogenicity and sexual reproduction in eight Candida genomes.</title>
        <authorList>
            <person name="Butler G."/>
            <person name="Rasmussen M.D."/>
            <person name="Lin M.F."/>
            <person name="Santos M.A.S."/>
            <person name="Sakthikumar S."/>
            <person name="Munro C.A."/>
            <person name="Rheinbay E."/>
            <person name="Grabherr M."/>
            <person name="Forche A."/>
            <person name="Reedy J.L."/>
            <person name="Agrafioti I."/>
            <person name="Arnaud M.B."/>
            <person name="Bates S."/>
            <person name="Brown A.J.P."/>
            <person name="Brunke S."/>
            <person name="Costanzo M.C."/>
            <person name="Fitzpatrick D.A."/>
            <person name="de Groot P.W.J."/>
            <person name="Harris D."/>
            <person name="Hoyer L.L."/>
            <person name="Hube B."/>
            <person name="Klis F.M."/>
            <person name="Kodira C."/>
            <person name="Lennard N."/>
            <person name="Logue M.E."/>
            <person name="Martin R."/>
            <person name="Neiman A.M."/>
            <person name="Nikolaou E."/>
            <person name="Quail M.A."/>
            <person name="Quinn J."/>
            <person name="Santos M.C."/>
            <person name="Schmitzberger F.F."/>
            <person name="Sherlock G."/>
            <person name="Shah P."/>
            <person name="Silverstein K.A.T."/>
            <person name="Skrzypek M.S."/>
            <person name="Soll D."/>
            <person name="Staggs R."/>
            <person name="Stansfield I."/>
            <person name="Stumpf M.P.H."/>
            <person name="Sudbery P.E."/>
            <person name="Srikantha T."/>
            <person name="Zeng Q."/>
            <person name="Berman J."/>
            <person name="Berriman M."/>
            <person name="Heitman J."/>
            <person name="Gow N.A.R."/>
            <person name="Lorenz M.C."/>
            <person name="Birren B.W."/>
            <person name="Kellis M."/>
            <person name="Cuomo C.A."/>
        </authorList>
    </citation>
    <scope>NUCLEOTIDE SEQUENCE [LARGE SCALE GENOMIC DNA]</scope>
    <source>
        <strain>WO-1</strain>
    </source>
</reference>
<keyword id="KW-0175">Coiled coil</keyword>
<keyword id="KW-0539">Nucleus</keyword>
<keyword id="KW-0687">Ribonucleoprotein</keyword>
<keyword id="KW-0690">Ribosome biogenesis</keyword>
<keyword id="KW-0698">rRNA processing</keyword>
<gene>
    <name type="primary">RRP36</name>
    <name type="ORF">CAWG_02000</name>
</gene>
<dbReference type="EMBL" id="CM000309">
    <property type="protein sequence ID" value="EEQ43752.1"/>
    <property type="molecule type" value="Genomic_DNA"/>
</dbReference>
<dbReference type="SMR" id="C4YMC1"/>
<dbReference type="PaxDb" id="5476-C4YMC1"/>
<dbReference type="VEuPathDB" id="FungiDB:CAWG_02000"/>
<dbReference type="HOGENOM" id="CLU_048802_3_0_1"/>
<dbReference type="OMA" id="ERKEMPW"/>
<dbReference type="OrthoDB" id="22952at766764"/>
<dbReference type="Proteomes" id="UP000001429">
    <property type="component" value="Chromosome R"/>
</dbReference>
<dbReference type="GO" id="GO:0030686">
    <property type="term" value="C:90S preribosome"/>
    <property type="evidence" value="ECO:0007669"/>
    <property type="project" value="TreeGrafter"/>
</dbReference>
<dbReference type="GO" id="GO:0005730">
    <property type="term" value="C:nucleolus"/>
    <property type="evidence" value="ECO:0007669"/>
    <property type="project" value="UniProtKB-SubCell"/>
</dbReference>
<dbReference type="GO" id="GO:0000462">
    <property type="term" value="P:maturation of SSU-rRNA from tricistronic rRNA transcript (SSU-rRNA, 5.8S rRNA, LSU-rRNA)"/>
    <property type="evidence" value="ECO:0007669"/>
    <property type="project" value="TreeGrafter"/>
</dbReference>
<dbReference type="InterPro" id="IPR009292">
    <property type="entry name" value="RRP36"/>
</dbReference>
<dbReference type="PANTHER" id="PTHR21738">
    <property type="entry name" value="RIBOSOMAL RNA PROCESSING PROTEIN 36 HOMOLOG"/>
    <property type="match status" value="1"/>
</dbReference>
<dbReference type="PANTHER" id="PTHR21738:SF0">
    <property type="entry name" value="RIBOSOMAL RNA PROCESSING PROTEIN 36 HOMOLOG"/>
    <property type="match status" value="1"/>
</dbReference>
<dbReference type="Pfam" id="PF06102">
    <property type="entry name" value="RRP36"/>
    <property type="match status" value="1"/>
</dbReference>
<accession>C4YMC1</accession>
<organism>
    <name type="scientific">Candida albicans (strain WO-1)</name>
    <name type="common">Yeast</name>
    <dbReference type="NCBI Taxonomy" id="294748"/>
    <lineage>
        <taxon>Eukaryota</taxon>
        <taxon>Fungi</taxon>
        <taxon>Dikarya</taxon>
        <taxon>Ascomycota</taxon>
        <taxon>Saccharomycotina</taxon>
        <taxon>Pichiomycetes</taxon>
        <taxon>Debaryomycetaceae</taxon>
        <taxon>Candida/Lodderomyces clade</taxon>
        <taxon>Candida</taxon>
    </lineage>
</organism>